<proteinExistence type="inferred from homology"/>
<keyword id="KW-0524">Neurogenesis</keyword>
<keyword id="KW-1185">Reference proteome</keyword>
<keyword id="KW-0770">Synapse</keyword>
<keyword id="KW-0833">Ubl conjugation pathway</keyword>
<name>FBSP1_DROSE</name>
<organism>
    <name type="scientific">Drosophila sechellia</name>
    <name type="common">Fruit fly</name>
    <dbReference type="NCBI Taxonomy" id="7238"/>
    <lineage>
        <taxon>Eukaryota</taxon>
        <taxon>Metazoa</taxon>
        <taxon>Ecdysozoa</taxon>
        <taxon>Arthropoda</taxon>
        <taxon>Hexapoda</taxon>
        <taxon>Insecta</taxon>
        <taxon>Pterygota</taxon>
        <taxon>Neoptera</taxon>
        <taxon>Endopterygota</taxon>
        <taxon>Diptera</taxon>
        <taxon>Brachycera</taxon>
        <taxon>Muscomorpha</taxon>
        <taxon>Ephydroidea</taxon>
        <taxon>Drosophilidae</taxon>
        <taxon>Drosophila</taxon>
        <taxon>Sophophora</taxon>
    </lineage>
</organism>
<evidence type="ECO:0000250" key="1"/>
<evidence type="ECO:0000250" key="2">
    <source>
        <dbReference type="UniProtKB" id="Q9V6L9"/>
    </source>
</evidence>
<evidence type="ECO:0000255" key="3"/>
<evidence type="ECO:0000255" key="4">
    <source>
        <dbReference type="PROSITE-ProRule" id="PRU00548"/>
    </source>
</evidence>
<evidence type="ECO:0000305" key="5"/>
<evidence type="ECO:0000312" key="6">
    <source>
        <dbReference type="EMBL" id="EDW47692.1"/>
    </source>
</evidence>
<gene>
    <name evidence="2" type="primary">Fsn</name>
    <name type="ORF">GM20297</name>
</gene>
<accession>B4HQ29</accession>
<reference evidence="6" key="1">
    <citation type="journal article" date="2007" name="Nature">
        <title>Evolution of genes and genomes on the Drosophila phylogeny.</title>
        <authorList>
            <consortium name="Drosophila 12 genomes consortium"/>
        </authorList>
    </citation>
    <scope>NUCLEOTIDE SEQUENCE [LARGE SCALE GENOMIC DNA]</scope>
    <source>
        <strain evidence="6">Rob3c / Tucson 14021-0248.25</strain>
    </source>
</reference>
<dbReference type="EMBL" id="CH480816">
    <property type="protein sequence ID" value="EDW47692.1"/>
    <property type="molecule type" value="Genomic_DNA"/>
</dbReference>
<dbReference type="SMR" id="B4HQ29"/>
<dbReference type="STRING" id="7238.B4HQ29"/>
<dbReference type="EnsemblMetazoa" id="FBtr0203282">
    <property type="protein sequence ID" value="FBpp0201774"/>
    <property type="gene ID" value="FBgn0175180"/>
</dbReference>
<dbReference type="EnsemblMetazoa" id="XM_002033643.2">
    <property type="protein sequence ID" value="XP_002033679.1"/>
    <property type="gene ID" value="LOC6608965"/>
</dbReference>
<dbReference type="GeneID" id="6608965"/>
<dbReference type="KEGG" id="dse:6608965"/>
<dbReference type="CTD" id="36460"/>
<dbReference type="HOGENOM" id="CLU_046756_1_0_1"/>
<dbReference type="OMA" id="ATKRASM"/>
<dbReference type="OrthoDB" id="187at7215"/>
<dbReference type="PhylomeDB" id="B4HQ29"/>
<dbReference type="UniPathway" id="UPA00143"/>
<dbReference type="Proteomes" id="UP000001292">
    <property type="component" value="Unassembled WGS sequence"/>
</dbReference>
<dbReference type="GO" id="GO:0005938">
    <property type="term" value="C:cell cortex"/>
    <property type="evidence" value="ECO:0007669"/>
    <property type="project" value="EnsemblMetazoa"/>
</dbReference>
<dbReference type="GO" id="GO:0031594">
    <property type="term" value="C:neuromuscular junction"/>
    <property type="evidence" value="ECO:0000250"/>
    <property type="project" value="UniProtKB"/>
</dbReference>
<dbReference type="GO" id="GO:0005634">
    <property type="term" value="C:nucleus"/>
    <property type="evidence" value="ECO:0007669"/>
    <property type="project" value="EnsemblMetazoa"/>
</dbReference>
<dbReference type="GO" id="GO:0045495">
    <property type="term" value="C:pole plasm"/>
    <property type="evidence" value="ECO:0007669"/>
    <property type="project" value="EnsemblMetazoa"/>
</dbReference>
<dbReference type="GO" id="GO:0019005">
    <property type="term" value="C:SCF ubiquitin ligase complex"/>
    <property type="evidence" value="ECO:0007669"/>
    <property type="project" value="EnsemblMetazoa"/>
</dbReference>
<dbReference type="GO" id="GO:0010629">
    <property type="term" value="P:negative regulation of gene expression"/>
    <property type="evidence" value="ECO:0007669"/>
    <property type="project" value="EnsemblMetazoa"/>
</dbReference>
<dbReference type="GO" id="GO:0045886">
    <property type="term" value="P:negative regulation of synaptic assembly at neuromuscular junction"/>
    <property type="evidence" value="ECO:0000250"/>
    <property type="project" value="UniProtKB"/>
</dbReference>
<dbReference type="GO" id="GO:0007274">
    <property type="term" value="P:neuromuscular synaptic transmission"/>
    <property type="evidence" value="ECO:0000250"/>
    <property type="project" value="UniProtKB"/>
</dbReference>
<dbReference type="GO" id="GO:0045732">
    <property type="term" value="P:positive regulation of protein catabolic process"/>
    <property type="evidence" value="ECO:0007669"/>
    <property type="project" value="EnsemblMetazoa"/>
</dbReference>
<dbReference type="GO" id="GO:0043161">
    <property type="term" value="P:proteasome-mediated ubiquitin-dependent protein catabolic process"/>
    <property type="evidence" value="ECO:0007669"/>
    <property type="project" value="TreeGrafter"/>
</dbReference>
<dbReference type="GO" id="GO:0016567">
    <property type="term" value="P:protein ubiquitination"/>
    <property type="evidence" value="ECO:0007669"/>
    <property type="project" value="UniProtKB-UniPathway"/>
</dbReference>
<dbReference type="GO" id="GO:0060386">
    <property type="term" value="P:synapse assembly involved in innervation"/>
    <property type="evidence" value="ECO:0007669"/>
    <property type="project" value="TreeGrafter"/>
</dbReference>
<dbReference type="CDD" id="cd22111">
    <property type="entry name" value="F-box_FBXO45"/>
    <property type="match status" value="1"/>
</dbReference>
<dbReference type="CDD" id="cd12907">
    <property type="entry name" value="SPRY_Fbox"/>
    <property type="match status" value="1"/>
</dbReference>
<dbReference type="FunFam" id="1.20.1280.50:FF:000140">
    <property type="entry name" value="F-box/SPRY domain-containing protein 1"/>
    <property type="match status" value="1"/>
</dbReference>
<dbReference type="FunFam" id="2.60.120.920:FF:000017">
    <property type="entry name" value="F-box/SPRY domain-containing protein 1"/>
    <property type="match status" value="1"/>
</dbReference>
<dbReference type="Gene3D" id="1.20.1280.50">
    <property type="match status" value="1"/>
</dbReference>
<dbReference type="Gene3D" id="2.60.120.920">
    <property type="match status" value="1"/>
</dbReference>
<dbReference type="InterPro" id="IPR001870">
    <property type="entry name" value="B30.2/SPRY"/>
</dbReference>
<dbReference type="InterPro" id="IPR043136">
    <property type="entry name" value="B30.2/SPRY_sf"/>
</dbReference>
<dbReference type="InterPro" id="IPR013320">
    <property type="entry name" value="ConA-like_dom_sf"/>
</dbReference>
<dbReference type="InterPro" id="IPR036047">
    <property type="entry name" value="F-box-like_dom_sf"/>
</dbReference>
<dbReference type="InterPro" id="IPR001810">
    <property type="entry name" value="F-box_dom"/>
</dbReference>
<dbReference type="InterPro" id="IPR050672">
    <property type="entry name" value="FBXO45-Fsn/SPSB_families"/>
</dbReference>
<dbReference type="InterPro" id="IPR003877">
    <property type="entry name" value="SPRY_dom"/>
</dbReference>
<dbReference type="InterPro" id="IPR035784">
    <property type="entry name" value="SPRY_FBXO45"/>
</dbReference>
<dbReference type="PANTHER" id="PTHR12245:SF7">
    <property type="entry name" value="F-BOX_SPRY DOMAIN-CONTAINING PROTEIN 1"/>
    <property type="match status" value="1"/>
</dbReference>
<dbReference type="PANTHER" id="PTHR12245">
    <property type="entry name" value="SPRY DOMAIN CONTAINING SOCS BOX PROTEIN"/>
    <property type="match status" value="1"/>
</dbReference>
<dbReference type="Pfam" id="PF12937">
    <property type="entry name" value="F-box-like"/>
    <property type="match status" value="1"/>
</dbReference>
<dbReference type="Pfam" id="PF00622">
    <property type="entry name" value="SPRY"/>
    <property type="match status" value="1"/>
</dbReference>
<dbReference type="SMART" id="SM00449">
    <property type="entry name" value="SPRY"/>
    <property type="match status" value="1"/>
</dbReference>
<dbReference type="SUPFAM" id="SSF49899">
    <property type="entry name" value="Concanavalin A-like lectins/glucanases"/>
    <property type="match status" value="1"/>
</dbReference>
<dbReference type="SUPFAM" id="SSF81383">
    <property type="entry name" value="F-box domain"/>
    <property type="match status" value="1"/>
</dbReference>
<dbReference type="PROSITE" id="PS50188">
    <property type="entry name" value="B302_SPRY"/>
    <property type="match status" value="1"/>
</dbReference>
<comment type="function">
    <text evidence="1">Required in the presynaptic motoneuron to down-regulate the levels of wnd and restrain synaptic terminal growth at the neuromuscular junction (NMJ).</text>
</comment>
<comment type="pathway">
    <text evidence="2">Protein modification; protein ubiquitination.</text>
</comment>
<comment type="subunit">
    <text evidence="2">Component of an E3 ubiquitin ligase complex composed of hiw and Fsn.</text>
</comment>
<comment type="subcellular location">
    <subcellularLocation>
        <location evidence="2">Synapse</location>
    </subcellularLocation>
</comment>
<comment type="similarity">
    <text evidence="5">Belongs to the FBXO45/Fsn family.</text>
</comment>
<protein>
    <recommendedName>
        <fullName evidence="2">F-box/SPRY domain-containing protein 1</fullName>
    </recommendedName>
</protein>
<feature type="chain" id="PRO_0000383316" description="F-box/SPRY domain-containing protein 1">
    <location>
        <begin position="1"/>
        <end position="255"/>
    </location>
</feature>
<feature type="domain" description="F-box" evidence="3">
    <location>
        <begin position="3"/>
        <end position="51"/>
    </location>
</feature>
<feature type="domain" description="B30.2/SPRY" evidence="4">
    <location>
        <begin position="61"/>
        <end position="253"/>
    </location>
</feature>
<sequence>MVDPVAALCNYNVLEVIFSYLELDDLSHCSQVCKSWYHFLNDENSDVWRWHCLNKLPKESLKSDLLSSVPTYKTKLRAYFHAWSPNDCSRNVYIKPNGFTLHRNPVAQSTDAARGKIGFRHGRHTWEVIWEGPLGTVAVIGISTKEAALQCHGYVALLGSDDQSWGWNLVENHLLHNGDMQGSYPLLNNAPKYQVGERIRVILDCEDNTLSFEKNYEFLGVAFRGLPDKKLYPTVSAVYGNTEVSMVYLGTPLDG</sequence>